<keyword id="KW-0002">3D-structure</keyword>
<keyword id="KW-0408">Iron</keyword>
<keyword id="KW-0479">Metal-binding</keyword>
<keyword id="KW-1185">Reference proteome</keyword>
<comment type="function">
    <text evidence="1">Involved in iron-sulfur (Fe-S) cluster assembly. May act as a regulator of Fe-S biogenesis.</text>
</comment>
<comment type="similarity">
    <text evidence="1">Belongs to the frataxin family.</text>
</comment>
<evidence type="ECO:0000255" key="1">
    <source>
        <dbReference type="HAMAP-Rule" id="MF_00142"/>
    </source>
</evidence>
<evidence type="ECO:0007829" key="2">
    <source>
        <dbReference type="PDB" id="4HS5"/>
    </source>
</evidence>
<feature type="chain" id="PRO_1000010946" description="Iron-sulfur cluster assembly protein CyaY">
    <location>
        <begin position="1"/>
        <end position="105"/>
    </location>
</feature>
<feature type="helix" evidence="2">
    <location>
        <begin position="3"/>
        <end position="24"/>
    </location>
</feature>
<feature type="strand" evidence="2">
    <location>
        <begin position="28"/>
        <end position="33"/>
    </location>
</feature>
<feature type="strand" evidence="2">
    <location>
        <begin position="36"/>
        <end position="41"/>
    </location>
</feature>
<feature type="strand" evidence="2">
    <location>
        <begin position="46"/>
        <end position="52"/>
    </location>
</feature>
<feature type="helix" evidence="2">
    <location>
        <begin position="53"/>
        <end position="55"/>
    </location>
</feature>
<feature type="strand" evidence="2">
    <location>
        <begin position="57"/>
        <end position="61"/>
    </location>
</feature>
<feature type="strand" evidence="2">
    <location>
        <begin position="66"/>
        <end position="72"/>
    </location>
</feature>
<feature type="strand" evidence="2">
    <location>
        <begin position="75"/>
        <end position="78"/>
    </location>
</feature>
<feature type="turn" evidence="2">
    <location>
        <begin position="79"/>
        <end position="81"/>
    </location>
</feature>
<feature type="helix" evidence="2">
    <location>
        <begin position="85"/>
        <end position="97"/>
    </location>
</feature>
<protein>
    <recommendedName>
        <fullName evidence="1">Iron-sulfur cluster assembly protein CyaY</fullName>
    </recommendedName>
</protein>
<name>CYAY_PSYIN</name>
<organism>
    <name type="scientific">Psychromonas ingrahamii (strain DSM 17664 / CCUG 51855 / 37)</name>
    <dbReference type="NCBI Taxonomy" id="357804"/>
    <lineage>
        <taxon>Bacteria</taxon>
        <taxon>Pseudomonadati</taxon>
        <taxon>Pseudomonadota</taxon>
        <taxon>Gammaproteobacteria</taxon>
        <taxon>Alteromonadales</taxon>
        <taxon>Psychromonadaceae</taxon>
        <taxon>Psychromonas</taxon>
    </lineage>
</organism>
<proteinExistence type="evidence at protein level"/>
<accession>A1SR01</accession>
<reference key="1">
    <citation type="journal article" date="2008" name="BMC Genomics">
        <title>Genomics of an extreme psychrophile, Psychromonas ingrahamii.</title>
        <authorList>
            <person name="Riley M."/>
            <person name="Staley J.T."/>
            <person name="Danchin A."/>
            <person name="Wang T.Z."/>
            <person name="Brettin T.S."/>
            <person name="Hauser L.J."/>
            <person name="Land M.L."/>
            <person name="Thompson L.S."/>
        </authorList>
    </citation>
    <scope>NUCLEOTIDE SEQUENCE [LARGE SCALE GENOMIC DNA]</scope>
    <source>
        <strain>DSM 17664 / CCUG 51855 / 37</strain>
    </source>
</reference>
<dbReference type="EMBL" id="CP000510">
    <property type="protein sequence ID" value="ABM01916.1"/>
    <property type="molecule type" value="Genomic_DNA"/>
</dbReference>
<dbReference type="RefSeq" id="WP_011768475.1">
    <property type="nucleotide sequence ID" value="NC_008709.1"/>
</dbReference>
<dbReference type="PDB" id="4HS5">
    <property type="method" value="X-ray"/>
    <property type="resolution" value="1.45 A"/>
    <property type="chains" value="A/B=1-105"/>
</dbReference>
<dbReference type="PDB" id="4LK8">
    <property type="method" value="X-ray"/>
    <property type="resolution" value="1.49 A"/>
    <property type="chains" value="A/B=1-105"/>
</dbReference>
<dbReference type="PDB" id="4LP1">
    <property type="method" value="X-ray"/>
    <property type="resolution" value="1.80 A"/>
    <property type="chains" value="A/B=1-105"/>
</dbReference>
<dbReference type="PDBsum" id="4HS5"/>
<dbReference type="PDBsum" id="4LK8"/>
<dbReference type="PDBsum" id="4LP1"/>
<dbReference type="SMR" id="A1SR01"/>
<dbReference type="STRING" id="357804.Ping_0042"/>
<dbReference type="KEGG" id="pin:Ping_0042"/>
<dbReference type="eggNOG" id="COG1965">
    <property type="taxonomic scope" value="Bacteria"/>
</dbReference>
<dbReference type="HOGENOM" id="CLU_080880_3_0_6"/>
<dbReference type="OrthoDB" id="285675at2"/>
<dbReference type="EvolutionaryTrace" id="A1SR01"/>
<dbReference type="Proteomes" id="UP000000639">
    <property type="component" value="Chromosome"/>
</dbReference>
<dbReference type="GO" id="GO:0005829">
    <property type="term" value="C:cytosol"/>
    <property type="evidence" value="ECO:0007669"/>
    <property type="project" value="TreeGrafter"/>
</dbReference>
<dbReference type="GO" id="GO:0008199">
    <property type="term" value="F:ferric iron binding"/>
    <property type="evidence" value="ECO:0007669"/>
    <property type="project" value="InterPro"/>
</dbReference>
<dbReference type="GO" id="GO:0008198">
    <property type="term" value="F:ferrous iron binding"/>
    <property type="evidence" value="ECO:0007669"/>
    <property type="project" value="TreeGrafter"/>
</dbReference>
<dbReference type="GO" id="GO:0016226">
    <property type="term" value="P:iron-sulfur cluster assembly"/>
    <property type="evidence" value="ECO:0007669"/>
    <property type="project" value="UniProtKB-UniRule"/>
</dbReference>
<dbReference type="CDD" id="cd00503">
    <property type="entry name" value="Frataxin"/>
    <property type="match status" value="1"/>
</dbReference>
<dbReference type="Gene3D" id="3.30.920.10">
    <property type="entry name" value="Frataxin/CyaY"/>
    <property type="match status" value="1"/>
</dbReference>
<dbReference type="HAMAP" id="MF_00142">
    <property type="entry name" value="CyaY"/>
    <property type="match status" value="1"/>
</dbReference>
<dbReference type="InterPro" id="IPR047584">
    <property type="entry name" value="CyaY"/>
</dbReference>
<dbReference type="InterPro" id="IPR002908">
    <property type="entry name" value="Frataxin/CyaY"/>
</dbReference>
<dbReference type="InterPro" id="IPR036524">
    <property type="entry name" value="Frataxin/CyaY_sf"/>
</dbReference>
<dbReference type="InterPro" id="IPR020895">
    <property type="entry name" value="Frataxin_CS"/>
</dbReference>
<dbReference type="NCBIfam" id="TIGR03421">
    <property type="entry name" value="FeS_CyaY"/>
    <property type="match status" value="1"/>
</dbReference>
<dbReference type="PANTHER" id="PTHR16821">
    <property type="entry name" value="FRATAXIN"/>
    <property type="match status" value="1"/>
</dbReference>
<dbReference type="PANTHER" id="PTHR16821:SF2">
    <property type="entry name" value="FRATAXIN, MITOCHONDRIAL"/>
    <property type="match status" value="1"/>
</dbReference>
<dbReference type="Pfam" id="PF01491">
    <property type="entry name" value="Frataxin_Cyay"/>
    <property type="match status" value="1"/>
</dbReference>
<dbReference type="SMART" id="SM01219">
    <property type="entry name" value="Frataxin_Cyay"/>
    <property type="match status" value="1"/>
</dbReference>
<dbReference type="SUPFAM" id="SSF55387">
    <property type="entry name" value="Frataxin/Nqo15-like"/>
    <property type="match status" value="1"/>
</dbReference>
<dbReference type="PROSITE" id="PS01344">
    <property type="entry name" value="FRATAXIN_1"/>
    <property type="match status" value="1"/>
</dbReference>
<dbReference type="PROSITE" id="PS50810">
    <property type="entry name" value="FRATAXIN_2"/>
    <property type="match status" value="1"/>
</dbReference>
<gene>
    <name evidence="1" type="primary">cyaY</name>
    <name type="ordered locus">Ping_0042</name>
</gene>
<sequence length="105" mass="12283">MNDSEFIQLADQLYQKIEEKIEESGADVDYDQNGSLLTLEFENHTKLIINRQQPLHQVWLATLENGHHYDYNNGKWIDDRSGDEFLTFLSAAIFKQSKETVDFTE</sequence>